<protein>
    <recommendedName>
        <fullName>Estrogen receptor beta</fullName>
        <shortName>ER-beta</shortName>
    </recommendedName>
    <alternativeName>
        <fullName>Nuclear receptor subfamily 3 group A member 2</fullName>
    </alternativeName>
</protein>
<reference key="1">
    <citation type="journal article" date="1996" name="Proc. Natl. Acad. Sci. U.S.A.">
        <title>Cloning of a novel receptor expressed in rat prostate and ovary.</title>
        <authorList>
            <person name="Kuiper G.G.J.M."/>
            <person name="Enmark E."/>
            <person name="Pelto-Huikko M."/>
            <person name="Nilsson S."/>
            <person name="Gustafsson J.-A."/>
        </authorList>
    </citation>
    <scope>NUCLEOTIDE SEQUENCE [MRNA] OF 46-530 (ISOFORM 1)</scope>
    <source>
        <strain>Sprague-Dawley</strain>
        <tissue>Prostate</tissue>
    </source>
</reference>
<reference key="2">
    <citation type="journal article" date="1998" name="Biochem. Biophys. Res. Commun.">
        <title>A novel isoform of rat estrogen receptor beta with 18 amino acid insertion in the ligand binding domain as a putative dominant negative regular of estrogen action.</title>
        <authorList>
            <person name="Maruyama K."/>
            <person name="Endoh H."/>
            <person name="Sasaki-Iwaoka H."/>
            <person name="Kanou H."/>
            <person name="Shimaya E."/>
            <person name="Hashimoto S."/>
            <person name="Kato S."/>
            <person name="Kawashima H."/>
        </authorList>
    </citation>
    <scope>NUCLEOTIDE SEQUENCE [MRNA] OF 46-530 (ISOFORM 2)</scope>
    <scope>FUNCTION (ISOFORMS 1 AND 2)</scope>
    <scope>TISSUE SPECIFICITY</scope>
    <source>
        <strain>Wistar</strain>
        <tissue>Ovary</tissue>
    </source>
</reference>
<reference key="3">
    <citation type="submission" date="1997-11" db="EMBL/GenBank/DDBJ databases">
        <title>Tissue specific responses to estrogen: an explanation based on differential activation of multiple estrogen receptors with different estrogen response elements.</title>
        <authorList>
            <person name="Aldridge T.C."/>
        </authorList>
    </citation>
    <scope>NUCLEOTIDE SEQUENCE (ISOFORM 2)</scope>
    <source>
        <strain>Wistar</strain>
        <tissue>Prostate</tissue>
    </source>
</reference>
<reference key="4">
    <citation type="journal article" date="1998" name="Endocrinology">
        <title>Identification of estrogen receptor beta2, a functional variant of estrogen receptor beta expressed in normal rat tissues.</title>
        <authorList>
            <person name="Petersen D.N."/>
            <person name="Tkalcevic G.T."/>
            <person name="Koza-Taylor P.H."/>
            <person name="Turi T.G."/>
            <person name="Brown T.A."/>
        </authorList>
    </citation>
    <scope>NUCLEOTIDE SEQUENCE OF 46-530 (ISOFORMS 1; 3 AND 4)</scope>
    <scope>FUNCTION (ISOFORMS 1; 3 AND 4)</scope>
    <source>
        <strain>Sprague-Dawley</strain>
    </source>
</reference>
<reference key="5">
    <citation type="submission" date="1999-06" db="EMBL/GenBank/DDBJ databases">
        <title>A novel splice variant of estrogen receptor beta found in rat brain.</title>
        <authorList>
            <person name="Price R."/>
            <person name="Handa R.J."/>
        </authorList>
    </citation>
    <scope>PARTIAL NUCLEOTIDE SEQUENCE (ISOFORM 5)</scope>
    <source>
        <strain>Sprague-Dawley</strain>
        <tissue>Brain</tissue>
    </source>
</reference>
<reference key="6">
    <citation type="journal article" date="2002" name="Mol. Endocrinol.">
        <title>The activating enzyme of NEDD8 inhibits steroid receptor function.</title>
        <authorList>
            <person name="Fan M."/>
            <person name="Long X."/>
            <person name="Bailey J.A."/>
            <person name="Reed C.A."/>
            <person name="Osborne E."/>
            <person name="Gize E.A."/>
            <person name="Kirk E.A."/>
            <person name="Bigsby R.M."/>
            <person name="Nephew K.P."/>
        </authorList>
    </citation>
    <scope>INTERACTION WITH UBE1C</scope>
</reference>
<reference key="7">
    <citation type="journal article" date="2009" name="Hum. Mol. Genet.">
        <title>Functional interaction of DYX1C1 with estrogen receptors suggests involvement of hormonal pathways in dyslexia.</title>
        <authorList>
            <person name="Massinen S."/>
            <person name="Tammimies K."/>
            <person name="Tapia-Paez I."/>
            <person name="Matsson H."/>
            <person name="Hokkanen M.E."/>
            <person name="Soederberg O."/>
            <person name="Landegren U."/>
            <person name="Castren E."/>
            <person name="Gustafsson J.A."/>
            <person name="Treuter E."/>
            <person name="Kere J."/>
        </authorList>
    </citation>
    <scope>INTERACTION WITH DNAAF4</scope>
</reference>
<reference key="8">
    <citation type="journal article" date="2011" name="Proc. Natl. Acad. Sci. U.S.A.">
        <title>C terminus of Hsc70-interacting protein (CHIP)-mediated degradation of hippocampal estrogen receptor-alpha and the critical period hypothesis of estrogen neuroprotection.</title>
        <authorList>
            <person name="Zhang Q.G."/>
            <person name="Han D."/>
            <person name="Wang R.M."/>
            <person name="Dong Y."/>
            <person name="Yang F."/>
            <person name="Vadlamudi R.K."/>
            <person name="Brann D.W."/>
        </authorList>
    </citation>
    <scope>INTERACTION WITH STUB1</scope>
    <scope>TISSUE SPECIFICITY</scope>
</reference>
<gene>
    <name type="primary">Esr2</name>
    <name type="synonym">Erbeta</name>
    <name type="synonym">Nr3a2</name>
</gene>
<name>ESR2_RAT</name>
<keyword id="KW-0002">3D-structure</keyword>
<keyword id="KW-0010">Activator</keyword>
<keyword id="KW-0025">Alternative splicing</keyword>
<keyword id="KW-0238">DNA-binding</keyword>
<keyword id="KW-0325">Glycoprotein</keyword>
<keyword id="KW-0446">Lipid-binding</keyword>
<keyword id="KW-0479">Metal-binding</keyword>
<keyword id="KW-0539">Nucleus</keyword>
<keyword id="KW-0597">Phosphoprotein</keyword>
<keyword id="KW-0675">Receptor</keyword>
<keyword id="KW-1185">Reference proteome</keyword>
<keyword id="KW-0754">Steroid-binding</keyword>
<keyword id="KW-0804">Transcription</keyword>
<keyword id="KW-0805">Transcription regulation</keyword>
<keyword id="KW-0862">Zinc</keyword>
<keyword id="KW-0863">Zinc-finger</keyword>
<sequence length="530" mass="59152">MEIKNSPSSLSSPASYNCSQSILPLEHGPIYIPSSYVDNRHEYSAMTFYSPAVMNYSVPGSTSNLDGGPVRLSTSPNVLWPTSGHLSPLATHCQSSLLYAEPQKSPWCEARSLEHTLPVNRETLKRKLSGSSCASPVTSPNAKRDAHFCPVCSDYASGYHYGVWSCEGCKAFFKRSIQGHNDYICPATNQCTIDKNRRKSCQACRLRKCYEVGMVKCGSRRERCGYRIVRRQRSSSEQVHCLSKAKRNGGHAPRVKELLLSTLSPEQLVLTLLEAEPPNVLVSRPSMPFTEASMMMSLTKLADKELVHMIGWAKKIPGFVELSLLDQVRLLESCWMEVLMVGLMWRSIDHPGKLIFAPDLVLDRDEGKCVEGILEIFDMLLATTSRFRELKLQHKEYLCVKAMILLNSSMYPLASANQEAESSRKLTHLLNAVTDALVWVIAKSGISSQQQSVRLANLLMLLSHVRHISNKGMEHLLSMKCKNVVPVYDLLLEMLNAHTLRGYKSSISGSECSSTEDSKNKESSQNLQSQ</sequence>
<evidence type="ECO:0000250" key="1"/>
<evidence type="ECO:0000250" key="2">
    <source>
        <dbReference type="UniProtKB" id="O08537"/>
    </source>
</evidence>
<evidence type="ECO:0000250" key="3">
    <source>
        <dbReference type="UniProtKB" id="Q92731"/>
    </source>
</evidence>
<evidence type="ECO:0000255" key="4">
    <source>
        <dbReference type="PROSITE-ProRule" id="PRU00407"/>
    </source>
</evidence>
<evidence type="ECO:0000255" key="5">
    <source>
        <dbReference type="PROSITE-ProRule" id="PRU01189"/>
    </source>
</evidence>
<evidence type="ECO:0000256" key="6">
    <source>
        <dbReference type="SAM" id="MobiDB-lite"/>
    </source>
</evidence>
<evidence type="ECO:0000269" key="7">
    <source>
    </source>
</evidence>
<evidence type="ECO:0000269" key="8">
    <source>
    </source>
</evidence>
<evidence type="ECO:0000269" key="9">
    <source>
    </source>
</evidence>
<evidence type="ECO:0000269" key="10">
    <source>
    </source>
</evidence>
<evidence type="ECO:0000269" key="11">
    <source>
    </source>
</evidence>
<evidence type="ECO:0000269" key="12">
    <source>
    </source>
</evidence>
<evidence type="ECO:0000303" key="13">
    <source>
    </source>
</evidence>
<evidence type="ECO:0000305" key="14"/>
<evidence type="ECO:0007829" key="15">
    <source>
        <dbReference type="PDB" id="2J7Y"/>
    </source>
</evidence>
<organism>
    <name type="scientific">Rattus norvegicus</name>
    <name type="common">Rat</name>
    <dbReference type="NCBI Taxonomy" id="10116"/>
    <lineage>
        <taxon>Eukaryota</taxon>
        <taxon>Metazoa</taxon>
        <taxon>Chordata</taxon>
        <taxon>Craniata</taxon>
        <taxon>Vertebrata</taxon>
        <taxon>Euteleostomi</taxon>
        <taxon>Mammalia</taxon>
        <taxon>Eutheria</taxon>
        <taxon>Euarchontoglires</taxon>
        <taxon>Glires</taxon>
        <taxon>Rodentia</taxon>
        <taxon>Myomorpha</taxon>
        <taxon>Muroidea</taxon>
        <taxon>Muridae</taxon>
        <taxon>Murinae</taxon>
        <taxon>Rattus</taxon>
    </lineage>
</organism>
<feature type="chain" id="PRO_0000053646" description="Estrogen receptor beta">
    <location>
        <begin position="1"/>
        <end position="530"/>
    </location>
</feature>
<feature type="domain" description="NR LBD" evidence="5">
    <location>
        <begin position="264"/>
        <end position="498"/>
    </location>
</feature>
<feature type="DNA-binding region" description="Nuclear receptor" evidence="4">
    <location>
        <begin position="149"/>
        <end position="214"/>
    </location>
</feature>
<feature type="zinc finger region" description="NR C4-type" evidence="4">
    <location>
        <begin position="149"/>
        <end position="169"/>
    </location>
</feature>
<feature type="zinc finger region" description="NR C4-type" evidence="4">
    <location>
        <begin position="185"/>
        <end position="209"/>
    </location>
</feature>
<feature type="region of interest" description="Modulating">
    <location>
        <begin position="1"/>
        <end position="148"/>
    </location>
</feature>
<feature type="region of interest" description="Disordered" evidence="6">
    <location>
        <begin position="506"/>
        <end position="530"/>
    </location>
</feature>
<feature type="compositionally biased region" description="Low complexity" evidence="6">
    <location>
        <begin position="506"/>
        <end position="515"/>
    </location>
</feature>
<feature type="modified residue" description="Phosphoserine; alternate" evidence="2">
    <location>
        <position position="61"/>
    </location>
</feature>
<feature type="modified residue" description="Phosphoserine; by MAPK" evidence="2">
    <location>
        <position position="87"/>
    </location>
</feature>
<feature type="modified residue" description="Phosphoserine; by MAPK" evidence="2">
    <location>
        <position position="105"/>
    </location>
</feature>
<feature type="glycosylation site" description="O-linked (GlcNAc) serine; alternate" evidence="1">
    <location>
        <position position="61"/>
    </location>
</feature>
<feature type="splice variant" id="VSP_003697" description="In isoform 3 and isoform 4." evidence="14">
    <location>
        <begin position="179"/>
        <end position="217"/>
    </location>
</feature>
<feature type="splice variant" id="VSP_003698" description="In isoform 5." evidence="14">
    <location>
        <begin position="219"/>
        <end position="318"/>
    </location>
</feature>
<feature type="splice variant" id="VSP_003699" description="In isoform 2 and isoform 4." evidence="13">
    <original>R</original>
    <variation>RSSEDPHWHVAQMKSAAPR</variation>
    <location>
        <position position="364"/>
    </location>
</feature>
<feature type="sequence conflict" description="In Ref. 3 and 4." evidence="14" ref="3 4">
    <original>L</original>
    <variation>Q</variation>
    <location>
        <position position="72"/>
    </location>
</feature>
<feature type="sequence conflict" description="In Ref. 3 and 4." evidence="14" ref="3 4">
    <original>P</original>
    <variation>A</variation>
    <location>
        <position position="150"/>
    </location>
</feature>
<feature type="sequence conflict" description="In Ref. 3; CAA05631." evidence="14" ref="3">
    <original>S</original>
    <variation>P</variation>
    <location>
        <position position="165"/>
    </location>
</feature>
<feature type="sequence conflict" description="In Ref. 3; CAA05631." evidence="14" ref="3">
    <original>S</original>
    <variation>P</variation>
    <location>
        <position position="505"/>
    </location>
</feature>
<feature type="helix" evidence="15">
    <location>
        <begin position="265"/>
        <end position="274"/>
    </location>
</feature>
<feature type="helix" evidence="15">
    <location>
        <begin position="291"/>
        <end position="315"/>
    </location>
</feature>
<feature type="helix" evidence="15">
    <location>
        <begin position="319"/>
        <end position="321"/>
    </location>
</feature>
<feature type="helix" evidence="15">
    <location>
        <begin position="324"/>
        <end position="347"/>
    </location>
</feature>
<feature type="strand" evidence="15">
    <location>
        <begin position="353"/>
        <end position="357"/>
    </location>
</feature>
<feature type="strand" evidence="15">
    <location>
        <begin position="360"/>
        <end position="363"/>
    </location>
</feature>
<feature type="helix" evidence="15">
    <location>
        <begin position="364"/>
        <end position="369"/>
    </location>
</feature>
<feature type="helix" evidence="15">
    <location>
        <begin position="373"/>
        <end position="390"/>
    </location>
</feature>
<feature type="helix" evidence="15">
    <location>
        <begin position="394"/>
        <end position="405"/>
    </location>
</feature>
<feature type="turn" evidence="15">
    <location>
        <begin position="406"/>
        <end position="409"/>
    </location>
</feature>
<feature type="helix" evidence="15">
    <location>
        <begin position="421"/>
        <end position="443"/>
    </location>
</feature>
<feature type="helix" evidence="15">
    <location>
        <begin position="448"/>
        <end position="481"/>
    </location>
</feature>
<feature type="helix" evidence="15">
    <location>
        <begin position="489"/>
        <end position="496"/>
    </location>
</feature>
<proteinExistence type="evidence at protein level"/>
<comment type="function">
    <molecule>Isoform 1</molecule>
    <text evidence="3 10 12">Nuclear hormone receptor. Binds estrogens with an affinity similar to that of ESR1/ER-alpha, and activates expression of reporter genes containing estrogen response elements (ERE) in an estrogen-dependent manner.</text>
</comment>
<comment type="function">
    <molecule>Isoform 2</molecule>
    <text evidence="12">Lacks ligand binding affinity and suppresses ESR1/ER-alpha and ESR2 isoform 1/ER-beta1 mediated transcriptional activation and may act as a dominant negative regulator of estrogen action.</text>
</comment>
<comment type="function">
    <molecule>Isoform 3</molecule>
    <text evidence="11">Unable to bind DNA and activate transcription due to the truncation of the DNA binding domain.</text>
</comment>
<comment type="function">
    <molecule>Isoform 4</molecule>
    <text evidence="11">Unable to bind DNA and activate transcription due to the truncation of the DNA binding domain.</text>
</comment>
<comment type="subunit">
    <text evidence="2 3 7 8 9">Binds DNA as a homodimer. Can form a heterodimer with ESR1. Interacts with NCOA1, NCOA3, NCOA5 and NCOA6 coactivators, leading to a strong increase of transcription of target genes. Interacts with UBE1C and AKAP13. Interacts with DNTTIP2 (By similarity). Interacts with CCDC62 in the presence of estradiol/E2; this interaction seems to enhance the transcription of target genes. Interacts with PRMT2. Interacts with CCAR2 (via N-terminus) in a ligand-independent manner (By similarity). Interacts with DNAAF4. Interacts with RBM39, in the presence of estradiol (E2) (By similarity). Interacts with STUB1/CHIP (PubMed:21808025).</text>
</comment>
<comment type="interaction">
    <interactant intactId="EBI-15938489">
        <id>Q62986</id>
    </interactant>
    <interactant intactId="EBI-7038538">
        <id>P62989</id>
        <label>Ubb</label>
    </interactant>
    <organismsDiffer>false</organismsDiffer>
    <experiments>2</experiments>
</comment>
<comment type="subcellular location">
    <subcellularLocation>
        <location evidence="3">Nucleus</location>
    </subcellularLocation>
</comment>
<comment type="alternative products">
    <event type="alternative splicing"/>
    <isoform>
        <id>Q62986-1</id>
        <name>1</name>
        <name>Beta1</name>
        <sequence type="displayed"/>
    </isoform>
    <isoform>
        <id>Q62986-2</id>
        <name>2</name>
        <name>Beta2</name>
        <sequence type="described" ref="VSP_003699"/>
    </isoform>
    <isoform>
        <id>Q62986-3</id>
        <name>3</name>
        <name>Beta1-delta3</name>
        <sequence type="described" ref="VSP_003697"/>
    </isoform>
    <isoform>
        <id>Q62986-4</id>
        <name>4</name>
        <name>Beta2-delta3</name>
        <sequence type="described" ref="VSP_003697 VSP_003699"/>
    </isoform>
    <isoform>
        <id>Q62986-5</id>
        <name>5</name>
        <name>Beta1-delta4</name>
        <sequence type="described" ref="VSP_003698"/>
    </isoform>
    <text>Additional isoforms seem to exist.</text>
</comment>
<comment type="tissue specificity">
    <text evidence="9 12">Expressed in the CA1 region of the hippocampus, expression decreases with age (at protein level) (PubMed:21808025). Expressed in prostate, ovary, lung, liver, kidney, fat, bone, brain, uterus and testis (PubMed:9600083).</text>
</comment>
<comment type="domain">
    <text>Composed of three domains: a modulating N-terminal domain, a DNA-binding domain and a C-terminal ligand-binding domain.</text>
</comment>
<comment type="PTM">
    <text evidence="1">Phosphorylation at Ser-87 and Ser-105 recruits NCOA1.</text>
</comment>
<comment type="similarity">
    <text evidence="14">Belongs to the nuclear hormone receptor family. NR3 subfamily.</text>
</comment>
<comment type="sequence caution" evidence="14">
    <conflict type="erroneous initiation">
        <sequence resource="EMBL-CDS" id="CAA05631"/>
    </conflict>
    <text>Truncated N-terminus.</text>
</comment>
<dbReference type="EMBL" id="U57439">
    <property type="protein sequence ID" value="AAC52602.1"/>
    <property type="molecule type" value="mRNA"/>
</dbReference>
<dbReference type="EMBL" id="AB012721">
    <property type="protein sequence ID" value="BAA25431.1"/>
    <property type="molecule type" value="mRNA"/>
</dbReference>
<dbReference type="EMBL" id="AJ002602">
    <property type="protein sequence ID" value="CAA05631.1"/>
    <property type="status" value="ALT_INIT"/>
    <property type="molecule type" value="Genomic_DNA"/>
</dbReference>
<dbReference type="EMBL" id="AJ002603">
    <property type="protein sequence ID" value="CAA05632.1"/>
    <property type="molecule type" value="Genomic_DNA"/>
</dbReference>
<dbReference type="EMBL" id="AF042058">
    <property type="protein sequence ID" value="AAB97424.1"/>
    <property type="molecule type" value="mRNA"/>
</dbReference>
<dbReference type="EMBL" id="AF042059">
    <property type="protein sequence ID" value="AAB97425.1"/>
    <property type="molecule type" value="mRNA"/>
</dbReference>
<dbReference type="EMBL" id="AF042060">
    <property type="protein sequence ID" value="AAB97426.1"/>
    <property type="molecule type" value="mRNA"/>
</dbReference>
<dbReference type="EMBL" id="AF042061">
    <property type="protein sequence ID" value="AAB97427.1"/>
    <property type="molecule type" value="mRNA"/>
</dbReference>
<dbReference type="EMBL" id="AF161187">
    <property type="protein sequence ID" value="AAD47637.1"/>
    <property type="molecule type" value="mRNA"/>
</dbReference>
<dbReference type="PIR" id="JW0046">
    <property type="entry name" value="JW0046"/>
</dbReference>
<dbReference type="RefSeq" id="NP_036886.1">
    <property type="nucleotide sequence ID" value="NM_012754.1"/>
</dbReference>
<dbReference type="PDB" id="1HJ1">
    <property type="method" value="X-ray"/>
    <property type="resolution" value="2.30 A"/>
    <property type="chains" value="A=255-509"/>
</dbReference>
<dbReference type="PDB" id="1QKN">
    <property type="method" value="X-ray"/>
    <property type="resolution" value="2.25 A"/>
    <property type="chains" value="A=255-509"/>
</dbReference>
<dbReference type="PDB" id="2J7X">
    <property type="method" value="X-ray"/>
    <property type="resolution" value="2.10 A"/>
    <property type="chains" value="A=255-509"/>
</dbReference>
<dbReference type="PDB" id="2J7Y">
    <property type="method" value="X-ray"/>
    <property type="resolution" value="1.80 A"/>
    <property type="chains" value="A=255-509"/>
</dbReference>
<dbReference type="PDBsum" id="1HJ1"/>
<dbReference type="PDBsum" id="1QKN"/>
<dbReference type="PDBsum" id="2J7X"/>
<dbReference type="PDBsum" id="2J7Y"/>
<dbReference type="SMR" id="Q62986"/>
<dbReference type="BioGRID" id="247214">
    <property type="interactions" value="6"/>
</dbReference>
<dbReference type="DIP" id="DIP-60383N"/>
<dbReference type="FunCoup" id="Q62986">
    <property type="interactions" value="324"/>
</dbReference>
<dbReference type="IntAct" id="Q62986">
    <property type="interactions" value="2"/>
</dbReference>
<dbReference type="STRING" id="10116.ENSRNOP00000043144"/>
<dbReference type="BindingDB" id="Q62986"/>
<dbReference type="ChEMBL" id="CHEMBL3021"/>
<dbReference type="DrugCentral" id="Q62986"/>
<dbReference type="GuidetoPHARMACOLOGY" id="621"/>
<dbReference type="GlyCosmos" id="Q62986">
    <property type="glycosylation" value="1 site, No reported glycans"/>
</dbReference>
<dbReference type="GlyGen" id="Q62986">
    <property type="glycosylation" value="1 site"/>
</dbReference>
<dbReference type="PhosphoSitePlus" id="Q62986"/>
<dbReference type="PaxDb" id="10116-ENSRNOP00000043144"/>
<dbReference type="GeneID" id="25149"/>
<dbReference type="KEGG" id="rno:25149"/>
<dbReference type="UCSC" id="RGD:2582">
    <molecule id="Q62986-1"/>
    <property type="organism name" value="rat"/>
</dbReference>
<dbReference type="AGR" id="RGD:2582"/>
<dbReference type="CTD" id="2100"/>
<dbReference type="RGD" id="2582">
    <property type="gene designation" value="Esr2"/>
</dbReference>
<dbReference type="eggNOG" id="KOG3575">
    <property type="taxonomic scope" value="Eukaryota"/>
</dbReference>
<dbReference type="InParanoid" id="Q62986"/>
<dbReference type="OrthoDB" id="5799427at2759"/>
<dbReference type="Reactome" id="R-RNO-1257604">
    <property type="pathway name" value="PIP3 activates AKT signaling"/>
</dbReference>
<dbReference type="Reactome" id="R-RNO-383280">
    <property type="pathway name" value="Nuclear Receptor transcription pathway"/>
</dbReference>
<dbReference type="Reactome" id="R-RNO-6811558">
    <property type="pathway name" value="PI5P, PP2A and IER3 Regulate PI3K/AKT Signaling"/>
</dbReference>
<dbReference type="Reactome" id="R-RNO-8939211">
    <property type="pathway name" value="ESR-mediated signaling"/>
</dbReference>
<dbReference type="Reactome" id="R-RNO-9009391">
    <property type="pathway name" value="Extra-nuclear estrogen signaling"/>
</dbReference>
<dbReference type="EvolutionaryTrace" id="Q62986"/>
<dbReference type="PRO" id="PR:Q62986"/>
<dbReference type="Proteomes" id="UP000002494">
    <property type="component" value="Unplaced"/>
</dbReference>
<dbReference type="GO" id="GO:0000785">
    <property type="term" value="C:chromatin"/>
    <property type="evidence" value="ECO:0000318"/>
    <property type="project" value="GO_Central"/>
</dbReference>
<dbReference type="GO" id="GO:0005737">
    <property type="term" value="C:cytoplasm"/>
    <property type="evidence" value="ECO:0000266"/>
    <property type="project" value="RGD"/>
</dbReference>
<dbReference type="GO" id="GO:0005739">
    <property type="term" value="C:mitochondrion"/>
    <property type="evidence" value="ECO:0000314"/>
    <property type="project" value="MGI"/>
</dbReference>
<dbReference type="GO" id="GO:0043025">
    <property type="term" value="C:neuronal cell body"/>
    <property type="evidence" value="ECO:0000314"/>
    <property type="project" value="RGD"/>
</dbReference>
<dbReference type="GO" id="GO:0005634">
    <property type="term" value="C:nucleus"/>
    <property type="evidence" value="ECO:0000266"/>
    <property type="project" value="RGD"/>
</dbReference>
<dbReference type="GO" id="GO:0043204">
    <property type="term" value="C:perikaryon"/>
    <property type="evidence" value="ECO:0000314"/>
    <property type="project" value="RGD"/>
</dbReference>
<dbReference type="GO" id="GO:0048471">
    <property type="term" value="C:perinuclear region of cytoplasm"/>
    <property type="evidence" value="ECO:0000314"/>
    <property type="project" value="RGD"/>
</dbReference>
<dbReference type="GO" id="GO:0032993">
    <property type="term" value="C:protein-DNA complex"/>
    <property type="evidence" value="ECO:0000314"/>
    <property type="project" value="RGD"/>
</dbReference>
<dbReference type="GO" id="GO:0003677">
    <property type="term" value="F:DNA binding"/>
    <property type="evidence" value="ECO:0000266"/>
    <property type="project" value="RGD"/>
</dbReference>
<dbReference type="GO" id="GO:0001228">
    <property type="term" value="F:DNA-binding transcription activator activity, RNA polymerase II-specific"/>
    <property type="evidence" value="ECO:0000314"/>
    <property type="project" value="NTNU_SB"/>
</dbReference>
<dbReference type="GO" id="GO:0019899">
    <property type="term" value="F:enzyme binding"/>
    <property type="evidence" value="ECO:0000353"/>
    <property type="project" value="RGD"/>
</dbReference>
<dbReference type="GO" id="GO:1903924">
    <property type="term" value="F:estradiol binding"/>
    <property type="evidence" value="ECO:0000353"/>
    <property type="project" value="RGD"/>
</dbReference>
<dbReference type="GO" id="GO:0034056">
    <property type="term" value="F:estrogen response element binding"/>
    <property type="evidence" value="ECO:0000314"/>
    <property type="project" value="RGD"/>
</dbReference>
<dbReference type="GO" id="GO:1901363">
    <property type="term" value="F:heterocyclic compound binding"/>
    <property type="evidence" value="ECO:0000353"/>
    <property type="project" value="RGD"/>
</dbReference>
<dbReference type="GO" id="GO:0042562">
    <property type="term" value="F:hormone binding"/>
    <property type="evidence" value="ECO:0000314"/>
    <property type="project" value="RGD"/>
</dbReference>
<dbReference type="GO" id="GO:0030284">
    <property type="term" value="F:nuclear estrogen receptor activity"/>
    <property type="evidence" value="ECO:0000266"/>
    <property type="project" value="RGD"/>
</dbReference>
<dbReference type="GO" id="GO:0004879">
    <property type="term" value="F:nuclear receptor activity"/>
    <property type="evidence" value="ECO:0000266"/>
    <property type="project" value="RGD"/>
</dbReference>
<dbReference type="GO" id="GO:0003707">
    <property type="term" value="F:nuclear steroid receptor activity"/>
    <property type="evidence" value="ECO:0000314"/>
    <property type="project" value="RGD"/>
</dbReference>
<dbReference type="GO" id="GO:0042975">
    <property type="term" value="F:peroxisome proliferator activated receptor binding"/>
    <property type="evidence" value="ECO:0000353"/>
    <property type="project" value="RGD"/>
</dbReference>
<dbReference type="GO" id="GO:1990841">
    <property type="term" value="F:promoter-specific chromatin binding"/>
    <property type="evidence" value="ECO:0000314"/>
    <property type="project" value="RGD"/>
</dbReference>
<dbReference type="GO" id="GO:0000978">
    <property type="term" value="F:RNA polymerase II cis-regulatory region sequence-specific DNA binding"/>
    <property type="evidence" value="ECO:0000314"/>
    <property type="project" value="NTNU_SB"/>
</dbReference>
<dbReference type="GO" id="GO:0043565">
    <property type="term" value="F:sequence-specific DNA binding"/>
    <property type="evidence" value="ECO:0000314"/>
    <property type="project" value="RGD"/>
</dbReference>
<dbReference type="GO" id="GO:0005496">
    <property type="term" value="F:steroid binding"/>
    <property type="evidence" value="ECO:0000314"/>
    <property type="project" value="UniProtKB"/>
</dbReference>
<dbReference type="GO" id="GO:1990239">
    <property type="term" value="F:steroid hormone binding"/>
    <property type="evidence" value="ECO:0000353"/>
    <property type="project" value="RGD"/>
</dbReference>
<dbReference type="GO" id="GO:0008270">
    <property type="term" value="F:zinc ion binding"/>
    <property type="evidence" value="ECO:0007669"/>
    <property type="project" value="UniProtKB-KW"/>
</dbReference>
<dbReference type="GO" id="GO:0021764">
    <property type="term" value="P:amygdala development"/>
    <property type="evidence" value="ECO:0000270"/>
    <property type="project" value="RGD"/>
</dbReference>
<dbReference type="GO" id="GO:0030521">
    <property type="term" value="P:androgen receptor signaling pathway"/>
    <property type="evidence" value="ECO:0000266"/>
    <property type="project" value="RGD"/>
</dbReference>
<dbReference type="GO" id="GO:0001662">
    <property type="term" value="P:behavioral fear response"/>
    <property type="evidence" value="ECO:0000314"/>
    <property type="project" value="RGD"/>
</dbReference>
<dbReference type="GO" id="GO:0007420">
    <property type="term" value="P:brain development"/>
    <property type="evidence" value="ECO:0000266"/>
    <property type="project" value="RGD"/>
</dbReference>
<dbReference type="GO" id="GO:0008283">
    <property type="term" value="P:cell population proliferation"/>
    <property type="evidence" value="ECO:0000266"/>
    <property type="project" value="RGD"/>
</dbReference>
<dbReference type="GO" id="GO:0071392">
    <property type="term" value="P:cellular response to estradiol stimulus"/>
    <property type="evidence" value="ECO:0000270"/>
    <property type="project" value="RGD"/>
</dbReference>
<dbReference type="GO" id="GO:0071222">
    <property type="term" value="P:cellular response to lipopolysaccharide"/>
    <property type="evidence" value="ECO:0000315"/>
    <property type="project" value="RGD"/>
</dbReference>
<dbReference type="GO" id="GO:0071259">
    <property type="term" value="P:cellular response to magnetism"/>
    <property type="evidence" value="ECO:0000270"/>
    <property type="project" value="RGD"/>
</dbReference>
<dbReference type="GO" id="GO:0071466">
    <property type="term" value="P:cellular response to xenobiotic stimulus"/>
    <property type="evidence" value="ECO:0000270"/>
    <property type="project" value="RGD"/>
</dbReference>
<dbReference type="GO" id="GO:0021549">
    <property type="term" value="P:cerebellum development"/>
    <property type="evidence" value="ECO:0000270"/>
    <property type="project" value="RGD"/>
</dbReference>
<dbReference type="GO" id="GO:0060743">
    <property type="term" value="P:epithelial cell maturation involved in prostate gland development"/>
    <property type="evidence" value="ECO:0000266"/>
    <property type="project" value="RGD"/>
</dbReference>
<dbReference type="GO" id="GO:0050673">
    <property type="term" value="P:epithelial cell proliferation"/>
    <property type="evidence" value="ECO:0000266"/>
    <property type="project" value="RGD"/>
</dbReference>
<dbReference type="GO" id="GO:0030520">
    <property type="term" value="P:estrogen receptor signaling pathway"/>
    <property type="evidence" value="ECO:0000266"/>
    <property type="project" value="RGD"/>
</dbReference>
<dbReference type="GO" id="GO:0044849">
    <property type="term" value="P:estrous cycle"/>
    <property type="evidence" value="ECO:0000315"/>
    <property type="project" value="RGD"/>
</dbReference>
<dbReference type="GO" id="GO:0008585">
    <property type="term" value="P:female gonad development"/>
    <property type="evidence" value="ECO:0000270"/>
    <property type="project" value="RGD"/>
</dbReference>
<dbReference type="GO" id="GO:0008628">
    <property type="term" value="P:hormone-mediated apoptotic signaling pathway"/>
    <property type="evidence" value="ECO:0000266"/>
    <property type="project" value="RGD"/>
</dbReference>
<dbReference type="GO" id="GO:0021854">
    <property type="term" value="P:hypothalamus development"/>
    <property type="evidence" value="ECO:0000270"/>
    <property type="project" value="RGD"/>
</dbReference>
<dbReference type="GO" id="GO:0007611">
    <property type="term" value="P:learning or memory"/>
    <property type="evidence" value="ECO:0000315"/>
    <property type="project" value="RGD"/>
</dbReference>
<dbReference type="GO" id="GO:0008584">
    <property type="term" value="P:male gonad development"/>
    <property type="evidence" value="ECO:0000270"/>
    <property type="project" value="RGD"/>
</dbReference>
<dbReference type="GO" id="GO:0060766">
    <property type="term" value="P:negative regulation of androgen receptor signaling pathway"/>
    <property type="evidence" value="ECO:0000266"/>
    <property type="project" value="RGD"/>
</dbReference>
<dbReference type="GO" id="GO:0048521">
    <property type="term" value="P:negative regulation of behavior"/>
    <property type="evidence" value="ECO:0000314"/>
    <property type="project" value="RGD"/>
</dbReference>
<dbReference type="GO" id="GO:0008285">
    <property type="term" value="P:negative regulation of cell population proliferation"/>
    <property type="evidence" value="ECO:0000266"/>
    <property type="project" value="RGD"/>
</dbReference>
<dbReference type="GO" id="GO:0050680">
    <property type="term" value="P:negative regulation of epithelial cell proliferation"/>
    <property type="evidence" value="ECO:0000314"/>
    <property type="project" value="RGD"/>
</dbReference>
<dbReference type="GO" id="GO:2000252">
    <property type="term" value="P:negative regulation of feeding behavior"/>
    <property type="evidence" value="ECO:0000315"/>
    <property type="project" value="RGD"/>
</dbReference>
<dbReference type="GO" id="GO:0043524">
    <property type="term" value="P:negative regulation of neuron apoptotic process"/>
    <property type="evidence" value="ECO:0000314"/>
    <property type="project" value="RGD"/>
</dbReference>
<dbReference type="GO" id="GO:2000378">
    <property type="term" value="P:negative regulation of reactive oxygen species metabolic process"/>
    <property type="evidence" value="ECO:0000315"/>
    <property type="project" value="RGD"/>
</dbReference>
<dbReference type="GO" id="GO:0048662">
    <property type="term" value="P:negative regulation of smooth muscle cell proliferation"/>
    <property type="evidence" value="ECO:0000315"/>
    <property type="project" value="RGD"/>
</dbReference>
<dbReference type="GO" id="GO:0000122">
    <property type="term" value="P:negative regulation of transcription by RNA polymerase II"/>
    <property type="evidence" value="ECO:0000314"/>
    <property type="project" value="RGD"/>
</dbReference>
<dbReference type="GO" id="GO:0001764">
    <property type="term" value="P:neuron migration"/>
    <property type="evidence" value="ECO:0000266"/>
    <property type="project" value="RGD"/>
</dbReference>
<dbReference type="GO" id="GO:0030518">
    <property type="term" value="P:nuclear receptor-mediated steroid hormone signaling pathway"/>
    <property type="evidence" value="ECO:0000314"/>
    <property type="project" value="RGD"/>
</dbReference>
<dbReference type="GO" id="GO:0001541">
    <property type="term" value="P:ovarian follicle development"/>
    <property type="evidence" value="ECO:0000270"/>
    <property type="project" value="RGD"/>
</dbReference>
<dbReference type="GO" id="GO:0043065">
    <property type="term" value="P:positive regulation of apoptotic process"/>
    <property type="evidence" value="ECO:0000314"/>
    <property type="project" value="RGD"/>
</dbReference>
<dbReference type="GO" id="GO:0051091">
    <property type="term" value="P:positive regulation of DNA-binding transcription factor activity"/>
    <property type="evidence" value="ECO:0000250"/>
    <property type="project" value="UniProtKB"/>
</dbReference>
<dbReference type="GO" id="GO:0045893">
    <property type="term" value="P:positive regulation of DNA-templated transcription"/>
    <property type="evidence" value="ECO:0000314"/>
    <property type="project" value="RGD"/>
</dbReference>
<dbReference type="GO" id="GO:0045742">
    <property type="term" value="P:positive regulation of epidermal growth factor receptor signaling pathway"/>
    <property type="evidence" value="ECO:0000315"/>
    <property type="project" value="RGD"/>
</dbReference>
<dbReference type="GO" id="GO:0070374">
    <property type="term" value="P:positive regulation of ERK1 and ERK2 cascade"/>
    <property type="evidence" value="ECO:0000314"/>
    <property type="project" value="RGD"/>
</dbReference>
<dbReference type="GO" id="GO:0045944">
    <property type="term" value="P:positive regulation of transcription by RNA polymerase II"/>
    <property type="evidence" value="ECO:0000314"/>
    <property type="project" value="NTNU_SB"/>
</dbReference>
<dbReference type="GO" id="GO:0030850">
    <property type="term" value="P:prostate gland development"/>
    <property type="evidence" value="ECO:0000270"/>
    <property type="project" value="RGD"/>
</dbReference>
<dbReference type="GO" id="GO:0060740">
    <property type="term" value="P:prostate gland epithelium morphogenesis"/>
    <property type="evidence" value="ECO:0000266"/>
    <property type="project" value="RGD"/>
</dbReference>
<dbReference type="GO" id="GO:0042127">
    <property type="term" value="P:regulation of cell population proliferation"/>
    <property type="evidence" value="ECO:0000266"/>
    <property type="project" value="RGD"/>
</dbReference>
<dbReference type="GO" id="GO:0006357">
    <property type="term" value="P:regulation of transcription by RNA polymerase II"/>
    <property type="evidence" value="ECO:0000318"/>
    <property type="project" value="GO_Central"/>
</dbReference>
<dbReference type="GO" id="GO:0014823">
    <property type="term" value="P:response to activity"/>
    <property type="evidence" value="ECO:0000270"/>
    <property type="project" value="RGD"/>
</dbReference>
<dbReference type="GO" id="GO:1903925">
    <property type="term" value="P:response to bisphenol A"/>
    <property type="evidence" value="ECO:0000270"/>
    <property type="project" value="RGD"/>
</dbReference>
<dbReference type="GO" id="GO:0071548">
    <property type="term" value="P:response to dexamethasone"/>
    <property type="evidence" value="ECO:0000270"/>
    <property type="project" value="RGD"/>
</dbReference>
<dbReference type="GO" id="GO:0032355">
    <property type="term" value="P:response to estradiol"/>
    <property type="evidence" value="ECO:0000270"/>
    <property type="project" value="RGD"/>
</dbReference>
<dbReference type="GO" id="GO:0043627">
    <property type="term" value="P:response to estrogen"/>
    <property type="evidence" value="ECO:0000270"/>
    <property type="project" value="RGD"/>
</dbReference>
<dbReference type="GO" id="GO:0045471">
    <property type="term" value="P:response to ethanol"/>
    <property type="evidence" value="ECO:0000270"/>
    <property type="project" value="RGD"/>
</dbReference>
<dbReference type="GO" id="GO:0033595">
    <property type="term" value="P:response to genistein"/>
    <property type="evidence" value="ECO:0000270"/>
    <property type="project" value="RGD"/>
</dbReference>
<dbReference type="GO" id="GO:0009725">
    <property type="term" value="P:response to hormone"/>
    <property type="evidence" value="ECO:0000270"/>
    <property type="project" value="RGD"/>
</dbReference>
<dbReference type="GO" id="GO:0044752">
    <property type="term" value="P:response to human chorionic gonadotropin"/>
    <property type="evidence" value="ECO:0000270"/>
    <property type="project" value="RGD"/>
</dbReference>
<dbReference type="GO" id="GO:0017085">
    <property type="term" value="P:response to insecticide"/>
    <property type="evidence" value="ECO:0000270"/>
    <property type="project" value="RGD"/>
</dbReference>
<dbReference type="GO" id="GO:0035094">
    <property type="term" value="P:response to nicotine"/>
    <property type="evidence" value="ECO:0000270"/>
    <property type="project" value="RGD"/>
</dbReference>
<dbReference type="GO" id="GO:0031667">
    <property type="term" value="P:response to nutrient levels"/>
    <property type="evidence" value="ECO:0000270"/>
    <property type="project" value="RGD"/>
</dbReference>
<dbReference type="GO" id="GO:1902074">
    <property type="term" value="P:response to salt"/>
    <property type="evidence" value="ECO:0000270"/>
    <property type="project" value="RGD"/>
</dbReference>
<dbReference type="GO" id="GO:0033574">
    <property type="term" value="P:response to testosterone"/>
    <property type="evidence" value="ECO:0000315"/>
    <property type="project" value="RGD"/>
</dbReference>
<dbReference type="GO" id="GO:0009410">
    <property type="term" value="P:response to xenobiotic stimulus"/>
    <property type="evidence" value="ECO:0000270"/>
    <property type="project" value="RGD"/>
</dbReference>
<dbReference type="GO" id="GO:0060009">
    <property type="term" value="P:Sertoli cell development"/>
    <property type="evidence" value="ECO:0000270"/>
    <property type="project" value="RGD"/>
</dbReference>
<dbReference type="GO" id="GO:0060011">
    <property type="term" value="P:Sertoli cell proliferation"/>
    <property type="evidence" value="ECO:0000315"/>
    <property type="project" value="RGD"/>
</dbReference>
<dbReference type="GO" id="GO:0060065">
    <property type="term" value="P:uterus development"/>
    <property type="evidence" value="ECO:0000266"/>
    <property type="project" value="RGD"/>
</dbReference>
<dbReference type="GO" id="GO:0060068">
    <property type="term" value="P:vagina development"/>
    <property type="evidence" value="ECO:0000266"/>
    <property type="project" value="RGD"/>
</dbReference>
<dbReference type="GO" id="GO:0042311">
    <property type="term" value="P:vasodilation"/>
    <property type="evidence" value="ECO:0000315"/>
    <property type="project" value="RGD"/>
</dbReference>
<dbReference type="CDD" id="cd07171">
    <property type="entry name" value="NR_DBD_ER"/>
    <property type="match status" value="1"/>
</dbReference>
<dbReference type="CDD" id="cd06949">
    <property type="entry name" value="NR_LBD_ER"/>
    <property type="match status" value="1"/>
</dbReference>
<dbReference type="FunFam" id="1.10.565.10:FF:000010">
    <property type="entry name" value="Estrogen receptor"/>
    <property type="match status" value="1"/>
</dbReference>
<dbReference type="FunFam" id="3.30.50.10:FF:000014">
    <property type="entry name" value="Estrogen receptor beta"/>
    <property type="match status" value="1"/>
</dbReference>
<dbReference type="Gene3D" id="3.30.50.10">
    <property type="entry name" value="Erythroid Transcription Factor GATA-1, subunit A"/>
    <property type="match status" value="1"/>
</dbReference>
<dbReference type="Gene3D" id="1.10.565.10">
    <property type="entry name" value="Retinoid X Receptor"/>
    <property type="match status" value="1"/>
</dbReference>
<dbReference type="InterPro" id="IPR021064">
    <property type="entry name" value="ER-beta-like_N"/>
</dbReference>
<dbReference type="InterPro" id="IPR028355">
    <property type="entry name" value="ER-beta/gamma"/>
</dbReference>
<dbReference type="InterPro" id="IPR024178">
    <property type="entry name" value="Est_rcpt/est-rel_rcp"/>
</dbReference>
<dbReference type="InterPro" id="IPR035500">
    <property type="entry name" value="NHR-like_dom_sf"/>
</dbReference>
<dbReference type="InterPro" id="IPR000536">
    <property type="entry name" value="Nucl_hrmn_rcpt_lig-bd"/>
</dbReference>
<dbReference type="InterPro" id="IPR050200">
    <property type="entry name" value="Nuclear_hormone_rcpt_NR3"/>
</dbReference>
<dbReference type="InterPro" id="IPR001723">
    <property type="entry name" value="Nuclear_hrmn_rcpt"/>
</dbReference>
<dbReference type="InterPro" id="IPR001628">
    <property type="entry name" value="Znf_hrmn_rcpt"/>
</dbReference>
<dbReference type="InterPro" id="IPR013088">
    <property type="entry name" value="Znf_NHR/GATA"/>
</dbReference>
<dbReference type="PANTHER" id="PTHR48092">
    <property type="entry name" value="KNIRPS-RELATED PROTEIN-RELATED"/>
    <property type="match status" value="1"/>
</dbReference>
<dbReference type="Pfam" id="PF12497">
    <property type="entry name" value="ERbeta_N"/>
    <property type="match status" value="1"/>
</dbReference>
<dbReference type="Pfam" id="PF00104">
    <property type="entry name" value="Hormone_recep"/>
    <property type="match status" value="1"/>
</dbReference>
<dbReference type="Pfam" id="PF00105">
    <property type="entry name" value="zf-C4"/>
    <property type="match status" value="1"/>
</dbReference>
<dbReference type="PIRSF" id="PIRSF500102">
    <property type="entry name" value="ER-b"/>
    <property type="match status" value="1"/>
</dbReference>
<dbReference type="PIRSF" id="PIRSF002527">
    <property type="entry name" value="ER-like_NR"/>
    <property type="match status" value="1"/>
</dbReference>
<dbReference type="PRINTS" id="PR00398">
    <property type="entry name" value="STRDHORMONER"/>
</dbReference>
<dbReference type="PRINTS" id="PR00047">
    <property type="entry name" value="STROIDFINGER"/>
</dbReference>
<dbReference type="SMART" id="SM00430">
    <property type="entry name" value="HOLI"/>
    <property type="match status" value="1"/>
</dbReference>
<dbReference type="SMART" id="SM00399">
    <property type="entry name" value="ZnF_C4"/>
    <property type="match status" value="1"/>
</dbReference>
<dbReference type="SUPFAM" id="SSF57716">
    <property type="entry name" value="Glucocorticoid receptor-like (DNA-binding domain)"/>
    <property type="match status" value="1"/>
</dbReference>
<dbReference type="SUPFAM" id="SSF48508">
    <property type="entry name" value="Nuclear receptor ligand-binding domain"/>
    <property type="match status" value="1"/>
</dbReference>
<dbReference type="PROSITE" id="PS51843">
    <property type="entry name" value="NR_LBD"/>
    <property type="match status" value="1"/>
</dbReference>
<dbReference type="PROSITE" id="PS00031">
    <property type="entry name" value="NUCLEAR_REC_DBD_1"/>
    <property type="match status" value="1"/>
</dbReference>
<dbReference type="PROSITE" id="PS51030">
    <property type="entry name" value="NUCLEAR_REC_DBD_2"/>
    <property type="match status" value="1"/>
</dbReference>
<accession>Q62986</accession>
<accession>O35784</accession>
<accession>O35785</accession>
<accession>O55015</accession>
<accession>O55016</accession>
<accession>O70195</accession>
<accession>Q9R185</accession>